<keyword id="KW-0413">Isomerase</keyword>
<keyword id="KW-1185">Reference proteome</keyword>
<accession>A5GVF8</accession>
<sequence>MADLQTQMKQAVALAATDQVKNGMVLGLGSGSTAALMIQEVGARLRDGRLTDIVGVTTSFQGEVLAAELGIPLQSLNAIDRIDLAIDGADEVDPAFELIKGGGACHVQEKLVARRAERFVVVVDSTKLVERLNLGFLLPVEVLAGAWRQVQAELQQLGGSAELRMAQRKAGPVVTDQGNLVLDVSFAGGINDPAGLETTINNIPGVLENGLFVGLADQVLVGEINDGVAGVRDLVKS</sequence>
<reference key="1">
    <citation type="submission" date="2006-05" db="EMBL/GenBank/DDBJ databases">
        <authorList>
            <consortium name="Genoscope"/>
        </authorList>
    </citation>
    <scope>NUCLEOTIDE SEQUENCE [LARGE SCALE GENOMIC DNA]</scope>
    <source>
        <strain>RCC307</strain>
    </source>
</reference>
<evidence type="ECO:0000255" key="1">
    <source>
        <dbReference type="HAMAP-Rule" id="MF_00170"/>
    </source>
</evidence>
<name>RPIA_SYNR3</name>
<gene>
    <name evidence="1" type="primary">rpiA</name>
    <name type="ordered locus">SynRCC307_1964</name>
</gene>
<comment type="function">
    <text evidence="1">Catalyzes the reversible conversion of ribose-5-phosphate to ribulose 5-phosphate.</text>
</comment>
<comment type="catalytic activity">
    <reaction evidence="1">
        <text>aldehydo-D-ribose 5-phosphate = D-ribulose 5-phosphate</text>
        <dbReference type="Rhea" id="RHEA:14657"/>
        <dbReference type="ChEBI" id="CHEBI:58121"/>
        <dbReference type="ChEBI" id="CHEBI:58273"/>
        <dbReference type="EC" id="5.3.1.6"/>
    </reaction>
</comment>
<comment type="pathway">
    <text evidence="1">Carbohydrate degradation; pentose phosphate pathway; D-ribose 5-phosphate from D-ribulose 5-phosphate (non-oxidative stage): step 1/1.</text>
</comment>
<comment type="subunit">
    <text evidence="1">Homodimer.</text>
</comment>
<comment type="similarity">
    <text evidence="1">Belongs to the ribose 5-phosphate isomerase family.</text>
</comment>
<feature type="chain" id="PRO_1000017019" description="Ribose-5-phosphate isomerase A">
    <location>
        <begin position="1"/>
        <end position="237"/>
    </location>
</feature>
<feature type="active site" description="Proton acceptor" evidence="1">
    <location>
        <position position="109"/>
    </location>
</feature>
<feature type="binding site" evidence="1">
    <location>
        <begin position="30"/>
        <end position="33"/>
    </location>
    <ligand>
        <name>substrate</name>
    </ligand>
</feature>
<feature type="binding site" evidence="1">
    <location>
        <begin position="87"/>
        <end position="90"/>
    </location>
    <ligand>
        <name>substrate</name>
    </ligand>
</feature>
<feature type="binding site" evidence="1">
    <location>
        <begin position="100"/>
        <end position="103"/>
    </location>
    <ligand>
        <name>substrate</name>
    </ligand>
</feature>
<feature type="binding site" evidence="1">
    <location>
        <position position="127"/>
    </location>
    <ligand>
        <name>substrate</name>
    </ligand>
</feature>
<organism>
    <name type="scientific">Synechococcus sp. (strain RCC307)</name>
    <dbReference type="NCBI Taxonomy" id="316278"/>
    <lineage>
        <taxon>Bacteria</taxon>
        <taxon>Bacillati</taxon>
        <taxon>Cyanobacteriota</taxon>
        <taxon>Cyanophyceae</taxon>
        <taxon>Synechococcales</taxon>
        <taxon>Synechococcaceae</taxon>
        <taxon>Synechococcus</taxon>
    </lineage>
</organism>
<dbReference type="EC" id="5.3.1.6" evidence="1"/>
<dbReference type="EMBL" id="CT978603">
    <property type="protein sequence ID" value="CAK28867.1"/>
    <property type="molecule type" value="Genomic_DNA"/>
</dbReference>
<dbReference type="SMR" id="A5GVF8"/>
<dbReference type="STRING" id="316278.SynRCC307_1964"/>
<dbReference type="KEGG" id="syr:SynRCC307_1964"/>
<dbReference type="eggNOG" id="COG0120">
    <property type="taxonomic scope" value="Bacteria"/>
</dbReference>
<dbReference type="HOGENOM" id="CLU_056590_1_1_3"/>
<dbReference type="OrthoDB" id="5870696at2"/>
<dbReference type="UniPathway" id="UPA00115">
    <property type="reaction ID" value="UER00412"/>
</dbReference>
<dbReference type="Proteomes" id="UP000001115">
    <property type="component" value="Chromosome"/>
</dbReference>
<dbReference type="GO" id="GO:0005829">
    <property type="term" value="C:cytosol"/>
    <property type="evidence" value="ECO:0007669"/>
    <property type="project" value="TreeGrafter"/>
</dbReference>
<dbReference type="GO" id="GO:0004751">
    <property type="term" value="F:ribose-5-phosphate isomerase activity"/>
    <property type="evidence" value="ECO:0007669"/>
    <property type="project" value="UniProtKB-UniRule"/>
</dbReference>
<dbReference type="GO" id="GO:0006014">
    <property type="term" value="P:D-ribose metabolic process"/>
    <property type="evidence" value="ECO:0007669"/>
    <property type="project" value="TreeGrafter"/>
</dbReference>
<dbReference type="GO" id="GO:0009052">
    <property type="term" value="P:pentose-phosphate shunt, non-oxidative branch"/>
    <property type="evidence" value="ECO:0007669"/>
    <property type="project" value="UniProtKB-UniRule"/>
</dbReference>
<dbReference type="CDD" id="cd01398">
    <property type="entry name" value="RPI_A"/>
    <property type="match status" value="1"/>
</dbReference>
<dbReference type="FunFam" id="3.30.70.260:FF:000018">
    <property type="entry name" value="Ribose-5-phosphate isomerase A"/>
    <property type="match status" value="1"/>
</dbReference>
<dbReference type="FunFam" id="3.40.50.1360:FF:000001">
    <property type="entry name" value="Ribose-5-phosphate isomerase A"/>
    <property type="match status" value="1"/>
</dbReference>
<dbReference type="Gene3D" id="3.30.70.260">
    <property type="match status" value="1"/>
</dbReference>
<dbReference type="Gene3D" id="3.40.50.1360">
    <property type="match status" value="1"/>
</dbReference>
<dbReference type="HAMAP" id="MF_00170">
    <property type="entry name" value="Rib_5P_isom_A"/>
    <property type="match status" value="1"/>
</dbReference>
<dbReference type="InterPro" id="IPR037171">
    <property type="entry name" value="NagB/RpiA_transferase-like"/>
</dbReference>
<dbReference type="InterPro" id="IPR020672">
    <property type="entry name" value="Ribose5P_isomerase_typA_subgr"/>
</dbReference>
<dbReference type="InterPro" id="IPR004788">
    <property type="entry name" value="Ribose5P_isomerase_type_A"/>
</dbReference>
<dbReference type="NCBIfam" id="NF001924">
    <property type="entry name" value="PRK00702.1"/>
    <property type="match status" value="1"/>
</dbReference>
<dbReference type="NCBIfam" id="TIGR00021">
    <property type="entry name" value="rpiA"/>
    <property type="match status" value="1"/>
</dbReference>
<dbReference type="PANTHER" id="PTHR11934">
    <property type="entry name" value="RIBOSE-5-PHOSPHATE ISOMERASE"/>
    <property type="match status" value="1"/>
</dbReference>
<dbReference type="PANTHER" id="PTHR11934:SF0">
    <property type="entry name" value="RIBOSE-5-PHOSPHATE ISOMERASE"/>
    <property type="match status" value="1"/>
</dbReference>
<dbReference type="Pfam" id="PF06026">
    <property type="entry name" value="Rib_5-P_isom_A"/>
    <property type="match status" value="1"/>
</dbReference>
<dbReference type="SUPFAM" id="SSF75445">
    <property type="entry name" value="D-ribose-5-phosphate isomerase (RpiA), lid domain"/>
    <property type="match status" value="1"/>
</dbReference>
<dbReference type="SUPFAM" id="SSF100950">
    <property type="entry name" value="NagB/RpiA/CoA transferase-like"/>
    <property type="match status" value="1"/>
</dbReference>
<proteinExistence type="inferred from homology"/>
<protein>
    <recommendedName>
        <fullName evidence="1">Ribose-5-phosphate isomerase A</fullName>
        <ecNumber evidence="1">5.3.1.6</ecNumber>
    </recommendedName>
    <alternativeName>
        <fullName evidence="1">Phosphoriboisomerase A</fullName>
        <shortName evidence="1">PRI</shortName>
    </alternativeName>
</protein>